<reference key="1">
    <citation type="journal article" date="2004" name="Gene">
        <title>Marsupial relationships and a timeline for marsupial radiation in South Gondwana.</title>
        <authorList>
            <person name="Nilsson M.A."/>
            <person name="Arnason U."/>
            <person name="Spencer P.B.S."/>
            <person name="Janke A."/>
        </authorList>
    </citation>
    <scope>NUCLEOTIDE SEQUENCE [GENOMIC DNA]</scope>
</reference>
<feature type="chain" id="PRO_0000254875" description="Cytochrome b">
    <location>
        <begin position="1"/>
        <end position="379"/>
    </location>
</feature>
<feature type="transmembrane region" description="Helical" evidence="2">
    <location>
        <begin position="33"/>
        <end position="53"/>
    </location>
</feature>
<feature type="transmembrane region" description="Helical" evidence="2">
    <location>
        <begin position="77"/>
        <end position="98"/>
    </location>
</feature>
<feature type="transmembrane region" description="Helical" evidence="2">
    <location>
        <begin position="113"/>
        <end position="133"/>
    </location>
</feature>
<feature type="transmembrane region" description="Helical" evidence="2">
    <location>
        <begin position="178"/>
        <end position="198"/>
    </location>
</feature>
<feature type="transmembrane region" description="Helical" evidence="2">
    <location>
        <begin position="226"/>
        <end position="246"/>
    </location>
</feature>
<feature type="transmembrane region" description="Helical" evidence="2">
    <location>
        <begin position="288"/>
        <end position="308"/>
    </location>
</feature>
<feature type="transmembrane region" description="Helical" evidence="2">
    <location>
        <begin position="320"/>
        <end position="340"/>
    </location>
</feature>
<feature type="transmembrane region" description="Helical" evidence="2">
    <location>
        <begin position="347"/>
        <end position="367"/>
    </location>
</feature>
<feature type="binding site" description="axial binding residue" evidence="2">
    <location>
        <position position="83"/>
    </location>
    <ligand>
        <name>heme b</name>
        <dbReference type="ChEBI" id="CHEBI:60344"/>
        <label>b562</label>
    </ligand>
    <ligandPart>
        <name>Fe</name>
        <dbReference type="ChEBI" id="CHEBI:18248"/>
    </ligandPart>
</feature>
<feature type="binding site" description="axial binding residue" evidence="2">
    <location>
        <position position="97"/>
    </location>
    <ligand>
        <name>heme b</name>
        <dbReference type="ChEBI" id="CHEBI:60344"/>
        <label>b566</label>
    </ligand>
    <ligandPart>
        <name>Fe</name>
        <dbReference type="ChEBI" id="CHEBI:18248"/>
    </ligandPart>
</feature>
<feature type="binding site" description="axial binding residue" evidence="2">
    <location>
        <position position="182"/>
    </location>
    <ligand>
        <name>heme b</name>
        <dbReference type="ChEBI" id="CHEBI:60344"/>
        <label>b562</label>
    </ligand>
    <ligandPart>
        <name>Fe</name>
        <dbReference type="ChEBI" id="CHEBI:18248"/>
    </ligandPart>
</feature>
<feature type="binding site" description="axial binding residue" evidence="2">
    <location>
        <position position="196"/>
    </location>
    <ligand>
        <name>heme b</name>
        <dbReference type="ChEBI" id="CHEBI:60344"/>
        <label>b566</label>
    </ligand>
    <ligandPart>
        <name>Fe</name>
        <dbReference type="ChEBI" id="CHEBI:18248"/>
    </ligandPart>
</feature>
<feature type="binding site" evidence="2">
    <location>
        <position position="201"/>
    </location>
    <ligand>
        <name>a ubiquinone</name>
        <dbReference type="ChEBI" id="CHEBI:16389"/>
    </ligand>
</feature>
<name>CYB_ZAGBR</name>
<protein>
    <recommendedName>
        <fullName>Cytochrome b</fullName>
    </recommendedName>
    <alternativeName>
        <fullName>Complex III subunit 3</fullName>
    </alternativeName>
    <alternativeName>
        <fullName>Complex III subunit III</fullName>
    </alternativeName>
    <alternativeName>
        <fullName>Cytochrome b-c1 complex subunit 3</fullName>
    </alternativeName>
    <alternativeName>
        <fullName>Ubiquinol-cytochrome-c reductase complex cytochrome b subunit</fullName>
    </alternativeName>
</protein>
<accession>Q5ZN98</accession>
<proteinExistence type="inferred from homology"/>
<sequence>MHNPRKTHPLIKIVNHTFIDLPTPSNISSWWNFGSLLGMCLIIQILTGLFLAMHYTADTTTAFSSVAHICRDVNYGWLIRYLHANGASLFFICIFLHIGRGLYYGSYMNTETWNIGVLLLFTVMATAFVGYVLPWGQMSFWGATVITNLLSAIPYIGTTLVEWIWGGFSVDKATLTRFFAFHFILPFVVAALTIIHLLFLHETGSNNPSGLNSDSDKIPFHPYYSIKDLLGFFIATLVLMLLVLFTPDLLGDPDNYTPANPLSTPPHIKPEWYFLFAYAILRSIPNKLGGVLALVASIMILALIPMLHTSCQRGLTFRPLTQTLFWILVTNLLTLTWIGGQPVEQPFIIIGQLASILYFLLITTFIPLAGLLENNLLKW</sequence>
<gene>
    <name type="primary">MT-CYB</name>
    <name type="synonym">COB</name>
    <name type="synonym">CYTB</name>
    <name type="synonym">MTCYB</name>
</gene>
<dbReference type="EMBL" id="AJ639865">
    <property type="protein sequence ID" value="CAG26341.1"/>
    <property type="molecule type" value="Genomic_DNA"/>
</dbReference>
<dbReference type="RefSeq" id="YP_122155.1">
    <property type="nucleotide sequence ID" value="NC_006364.1"/>
</dbReference>
<dbReference type="SMR" id="Q5ZN98"/>
<dbReference type="GeneID" id="3112551"/>
<dbReference type="CTD" id="4519"/>
<dbReference type="GO" id="GO:0005743">
    <property type="term" value="C:mitochondrial inner membrane"/>
    <property type="evidence" value="ECO:0007669"/>
    <property type="project" value="UniProtKB-SubCell"/>
</dbReference>
<dbReference type="GO" id="GO:0045275">
    <property type="term" value="C:respiratory chain complex III"/>
    <property type="evidence" value="ECO:0007669"/>
    <property type="project" value="InterPro"/>
</dbReference>
<dbReference type="GO" id="GO:0046872">
    <property type="term" value="F:metal ion binding"/>
    <property type="evidence" value="ECO:0007669"/>
    <property type="project" value="UniProtKB-KW"/>
</dbReference>
<dbReference type="GO" id="GO:0008121">
    <property type="term" value="F:ubiquinol-cytochrome-c reductase activity"/>
    <property type="evidence" value="ECO:0007669"/>
    <property type="project" value="InterPro"/>
</dbReference>
<dbReference type="GO" id="GO:0006122">
    <property type="term" value="P:mitochondrial electron transport, ubiquinol to cytochrome c"/>
    <property type="evidence" value="ECO:0007669"/>
    <property type="project" value="TreeGrafter"/>
</dbReference>
<dbReference type="CDD" id="cd00290">
    <property type="entry name" value="cytochrome_b_C"/>
    <property type="match status" value="1"/>
</dbReference>
<dbReference type="CDD" id="cd00284">
    <property type="entry name" value="Cytochrome_b_N"/>
    <property type="match status" value="1"/>
</dbReference>
<dbReference type="FunFam" id="1.20.810.10:FF:000002">
    <property type="entry name" value="Cytochrome b"/>
    <property type="match status" value="1"/>
</dbReference>
<dbReference type="Gene3D" id="1.20.810.10">
    <property type="entry name" value="Cytochrome Bc1 Complex, Chain C"/>
    <property type="match status" value="1"/>
</dbReference>
<dbReference type="InterPro" id="IPR005798">
    <property type="entry name" value="Cyt_b/b6_C"/>
</dbReference>
<dbReference type="InterPro" id="IPR036150">
    <property type="entry name" value="Cyt_b/b6_C_sf"/>
</dbReference>
<dbReference type="InterPro" id="IPR005797">
    <property type="entry name" value="Cyt_b/b6_N"/>
</dbReference>
<dbReference type="InterPro" id="IPR027387">
    <property type="entry name" value="Cytb/b6-like_sf"/>
</dbReference>
<dbReference type="InterPro" id="IPR030689">
    <property type="entry name" value="Cytochrome_b"/>
</dbReference>
<dbReference type="InterPro" id="IPR048260">
    <property type="entry name" value="Cytochrome_b_C_euk/bac"/>
</dbReference>
<dbReference type="InterPro" id="IPR048259">
    <property type="entry name" value="Cytochrome_b_N_euk/bac"/>
</dbReference>
<dbReference type="InterPro" id="IPR016174">
    <property type="entry name" value="Di-haem_cyt_TM"/>
</dbReference>
<dbReference type="PANTHER" id="PTHR19271">
    <property type="entry name" value="CYTOCHROME B"/>
    <property type="match status" value="1"/>
</dbReference>
<dbReference type="PANTHER" id="PTHR19271:SF16">
    <property type="entry name" value="CYTOCHROME B"/>
    <property type="match status" value="1"/>
</dbReference>
<dbReference type="Pfam" id="PF00032">
    <property type="entry name" value="Cytochrom_B_C"/>
    <property type="match status" value="1"/>
</dbReference>
<dbReference type="Pfam" id="PF00033">
    <property type="entry name" value="Cytochrome_B"/>
    <property type="match status" value="1"/>
</dbReference>
<dbReference type="PIRSF" id="PIRSF038885">
    <property type="entry name" value="COB"/>
    <property type="match status" value="1"/>
</dbReference>
<dbReference type="SUPFAM" id="SSF81648">
    <property type="entry name" value="a domain/subunit of cytochrome bc1 complex (Ubiquinol-cytochrome c reductase)"/>
    <property type="match status" value="1"/>
</dbReference>
<dbReference type="SUPFAM" id="SSF81342">
    <property type="entry name" value="Transmembrane di-heme cytochromes"/>
    <property type="match status" value="1"/>
</dbReference>
<dbReference type="PROSITE" id="PS51003">
    <property type="entry name" value="CYTB_CTER"/>
    <property type="match status" value="1"/>
</dbReference>
<dbReference type="PROSITE" id="PS51002">
    <property type="entry name" value="CYTB_NTER"/>
    <property type="match status" value="1"/>
</dbReference>
<geneLocation type="mitochondrion"/>
<comment type="function">
    <text evidence="2">Component of the ubiquinol-cytochrome c reductase complex (complex III or cytochrome b-c1 complex) that is part of the mitochondrial respiratory chain. The b-c1 complex mediates electron transfer from ubiquinol to cytochrome c. Contributes to the generation of a proton gradient across the mitochondrial membrane that is then used for ATP synthesis.</text>
</comment>
<comment type="cofactor">
    <cofactor evidence="2">
        <name>heme b</name>
        <dbReference type="ChEBI" id="CHEBI:60344"/>
    </cofactor>
    <text evidence="2">Binds 2 heme b groups non-covalently.</text>
</comment>
<comment type="subunit">
    <text evidence="2">The cytochrome bc1 complex contains 11 subunits: 3 respiratory subunits (MT-CYB, CYC1 and UQCRFS1), 2 core proteins (UQCRC1 and UQCRC2) and 6 low-molecular weight proteins (UQCRH/QCR6, UQCRB/QCR7, UQCRQ/QCR8, UQCR10/QCR9, UQCR11/QCR10 and a cleavage product of UQCRFS1). This cytochrome bc1 complex then forms a dimer.</text>
</comment>
<comment type="subcellular location">
    <subcellularLocation>
        <location evidence="2">Mitochondrion inner membrane</location>
        <topology evidence="2">Multi-pass membrane protein</topology>
    </subcellularLocation>
</comment>
<comment type="miscellaneous">
    <text evidence="1">Heme 1 (or BL or b562) is low-potential and absorbs at about 562 nm, and heme 2 (or BH or b566) is high-potential and absorbs at about 566 nm.</text>
</comment>
<comment type="similarity">
    <text evidence="3 4">Belongs to the cytochrome b family.</text>
</comment>
<comment type="caution">
    <text evidence="2">The full-length protein contains only eight transmembrane helices, not nine as predicted by bioinformatics tools.</text>
</comment>
<organism>
    <name type="scientific">Zaglossus bruijni</name>
    <name type="common">Western long-beaked echidna</name>
    <dbReference type="NCBI Taxonomy" id="33543"/>
    <lineage>
        <taxon>Eukaryota</taxon>
        <taxon>Metazoa</taxon>
        <taxon>Chordata</taxon>
        <taxon>Craniata</taxon>
        <taxon>Vertebrata</taxon>
        <taxon>Euteleostomi</taxon>
        <taxon>Mammalia</taxon>
        <taxon>Monotremata</taxon>
        <taxon>Tachyglossidae</taxon>
        <taxon>Zaglossus</taxon>
    </lineage>
</organism>
<keyword id="KW-0249">Electron transport</keyword>
<keyword id="KW-0349">Heme</keyword>
<keyword id="KW-0408">Iron</keyword>
<keyword id="KW-0472">Membrane</keyword>
<keyword id="KW-0479">Metal-binding</keyword>
<keyword id="KW-0496">Mitochondrion</keyword>
<keyword id="KW-0999">Mitochondrion inner membrane</keyword>
<keyword id="KW-0679">Respiratory chain</keyword>
<keyword id="KW-0812">Transmembrane</keyword>
<keyword id="KW-1133">Transmembrane helix</keyword>
<keyword id="KW-0813">Transport</keyword>
<keyword id="KW-0830">Ubiquinone</keyword>
<evidence type="ECO:0000250" key="1"/>
<evidence type="ECO:0000250" key="2">
    <source>
        <dbReference type="UniProtKB" id="P00157"/>
    </source>
</evidence>
<evidence type="ECO:0000255" key="3">
    <source>
        <dbReference type="PROSITE-ProRule" id="PRU00967"/>
    </source>
</evidence>
<evidence type="ECO:0000255" key="4">
    <source>
        <dbReference type="PROSITE-ProRule" id="PRU00968"/>
    </source>
</evidence>